<feature type="chain" id="PRO_0000269769" description="Histone-lysine N-methyltransferase, H3 lysine-4 specific">
    <location>
        <begin position="1"/>
        <end position="1076"/>
    </location>
</feature>
<feature type="domain" description="SET" evidence="4">
    <location>
        <begin position="934"/>
        <end position="1051"/>
    </location>
</feature>
<feature type="domain" description="Post-SET" evidence="3">
    <location>
        <begin position="1060"/>
        <end position="1076"/>
    </location>
</feature>
<feature type="region of interest" description="Disordered" evidence="5">
    <location>
        <begin position="174"/>
        <end position="210"/>
    </location>
</feature>
<feature type="region of interest" description="Disordered" evidence="5">
    <location>
        <begin position="325"/>
        <end position="387"/>
    </location>
</feature>
<feature type="region of interest" description="Disordered" evidence="5">
    <location>
        <begin position="493"/>
        <end position="599"/>
    </location>
</feature>
<feature type="region of interest" description="Disordered" evidence="5">
    <location>
        <begin position="623"/>
        <end position="744"/>
    </location>
</feature>
<feature type="short sequence motif" description="RxxxRR motif" evidence="1">
    <location>
        <begin position="900"/>
        <end position="905"/>
    </location>
</feature>
<feature type="compositionally biased region" description="Basic and acidic residues" evidence="5">
    <location>
        <begin position="330"/>
        <end position="377"/>
    </location>
</feature>
<feature type="compositionally biased region" description="Basic residues" evidence="5">
    <location>
        <begin position="512"/>
        <end position="525"/>
    </location>
</feature>
<feature type="compositionally biased region" description="Basic and acidic residues" evidence="5">
    <location>
        <begin position="544"/>
        <end position="561"/>
    </location>
</feature>
<feature type="compositionally biased region" description="Basic residues" evidence="5">
    <location>
        <begin position="668"/>
        <end position="682"/>
    </location>
</feature>
<feature type="compositionally biased region" description="Basic and acidic residues" evidence="5">
    <location>
        <begin position="683"/>
        <end position="704"/>
    </location>
</feature>
<feature type="compositionally biased region" description="Basic and acidic residues" evidence="5">
    <location>
        <begin position="720"/>
        <end position="742"/>
    </location>
</feature>
<feature type="binding site" evidence="4">
    <location>
        <position position="1050"/>
    </location>
    <ligand>
        <name>S-adenosyl-L-methionine</name>
        <dbReference type="ChEBI" id="CHEBI:59789"/>
    </ligand>
</feature>
<comment type="function">
    <text evidence="1">Catalytic component of the COMPASS (Set1C) complex that specifically mono-, di- and trimethylates histone H3 to form H3K4me1/2/3. Binds RNAs which might negatively affect its histone methyltransferase activity. COMPASS recognizes ubiquitinated H2B on one face of the nucleosome which stimulates the methylation of H3 on the opposing face.</text>
</comment>
<comment type="catalytic activity">
    <reaction evidence="1">
        <text>L-lysyl(4)-[histone H3] + 3 S-adenosyl-L-methionine = N(6),N(6),N(6)-trimethyl-L-lysyl(4)-[histone H3] + 3 S-adenosyl-L-homocysteine + 3 H(+)</text>
        <dbReference type="Rhea" id="RHEA:60260"/>
        <dbReference type="Rhea" id="RHEA-COMP:15537"/>
        <dbReference type="Rhea" id="RHEA-COMP:15547"/>
        <dbReference type="ChEBI" id="CHEBI:15378"/>
        <dbReference type="ChEBI" id="CHEBI:29969"/>
        <dbReference type="ChEBI" id="CHEBI:57856"/>
        <dbReference type="ChEBI" id="CHEBI:59789"/>
        <dbReference type="ChEBI" id="CHEBI:61961"/>
        <dbReference type="EC" id="2.1.1.354"/>
    </reaction>
</comment>
<comment type="catalytic activity">
    <reaction evidence="1">
        <text>N(6)-methyl-L-lysyl(4)-[histone H3] + S-adenosyl-L-methionine = N(6),N(6)-dimethyl-L-lysyl(4)-[histone H3] + S-adenosyl-L-homocysteine + H(+)</text>
        <dbReference type="Rhea" id="RHEA:60268"/>
        <dbReference type="Rhea" id="RHEA-COMP:15540"/>
        <dbReference type="Rhea" id="RHEA-COMP:15543"/>
        <dbReference type="ChEBI" id="CHEBI:15378"/>
        <dbReference type="ChEBI" id="CHEBI:57856"/>
        <dbReference type="ChEBI" id="CHEBI:59789"/>
        <dbReference type="ChEBI" id="CHEBI:61929"/>
        <dbReference type="ChEBI" id="CHEBI:61976"/>
    </reaction>
</comment>
<comment type="catalytic activity">
    <reaction evidence="1">
        <text>N(6),N(6)-dimethyl-L-lysyl(4)-[histone H3] + S-adenosyl-L-methionine = N(6),N(6),N(6)-trimethyl-L-lysyl(4)-[histone H3] + S-adenosyl-L-homocysteine + H(+)</text>
        <dbReference type="Rhea" id="RHEA:60272"/>
        <dbReference type="Rhea" id="RHEA-COMP:15537"/>
        <dbReference type="Rhea" id="RHEA-COMP:15540"/>
        <dbReference type="ChEBI" id="CHEBI:15378"/>
        <dbReference type="ChEBI" id="CHEBI:57856"/>
        <dbReference type="ChEBI" id="CHEBI:59789"/>
        <dbReference type="ChEBI" id="CHEBI:61961"/>
        <dbReference type="ChEBI" id="CHEBI:61976"/>
    </reaction>
</comment>
<comment type="subunit">
    <text evidence="1">Component of the Set1C/COMPASS complex.</text>
</comment>
<comment type="subcellular location">
    <subcellularLocation>
        <location evidence="6">Nucleus</location>
    </subcellularLocation>
    <subcellularLocation>
        <location evidence="6">Chromosome</location>
    </subcellularLocation>
</comment>
<comment type="domain">
    <text evidence="1">The RxxxRR motif forms an adapter helix that bridges the nucleosome and ubiquitin.</text>
</comment>
<comment type="similarity">
    <text evidence="4">Belongs to the class V-like SAM-binding methyltransferase superfamily.</text>
</comment>
<reference key="1">
    <citation type="journal article" date="2015" name="Genome Announc.">
        <title>Draft genome sequence of the cellulolytic fungus Chaetomium globosum.</title>
        <authorList>
            <person name="Cuomo C.A."/>
            <person name="Untereiner W.A."/>
            <person name="Ma L.-J."/>
            <person name="Grabherr M."/>
            <person name="Birren B.W."/>
        </authorList>
    </citation>
    <scope>NUCLEOTIDE SEQUENCE [LARGE SCALE GENOMIC DNA]</scope>
    <source>
        <strain>ATCC 6205 / CBS 148.51 / DSM 1962 / NBRC 6347 / NRRL 1970</strain>
    </source>
</reference>
<sequence length="1076" mass="121756">MGTIWLISAASDDQDDAPPSDPRLAKGGRLNYINVDFHLPKARLRHAPYNLKPYKYDPKTSCGPGPPTQVVVTGFNPLIAFSKVTAVFASFGDIAESSNKMHPDTGSYLGFATFRYRDSKPSRSRPISITGADAAKRAIRAMHGKRIEANMVRVEYDAEGKKSSRMLVEVLQKGNETTPALGEPRIPTGPKPKEVAPGPPPTAPKGPAAHRGGLMNVQGVWVPKPRPDSIIEVEPVIGHLKHDPYIFVGHEHVPVMPTTVAHMKRRLKTYMFEDIRADRTGYYIVFQDSGYGRAEAERCFRSADRTAFFTYTMVMVLHLYGTDGKASHAHASDTRRRTRTPERKHVDEARPHREHDRSRRDEERARRDEQDRRRREDEADLEEEKRQRAKNYDPVLEATDVVLRGMKEQLIKIIRTKIAAPALFNFLDPVNHLAKRRRLNLEDPHSARLPPIVLDEFEDRSPVSTPNSRADPIERRTARLDVSALPRIRKVKNAGLNTRKHGFNDPFARNRPTARRTAFRSLHYRLRSDSEGESEDEAENRTSLGRDTEEPESRPRSRMSSDDEGDKDDYASWGPGDDDSMTEASFALGDGPGLAKKRKLDLQVETAIKRQKKTDEELFGVTIDRIGTEFPSREDSLEDVLPPGPGGGEEKDIGSSRLPTPLLQEGKAKKKAPAKTKRKSKKQLFEEREALKRQQQEIFEREALQSEDVDEVIPTPEPESEPKKSKVEKEKEKEEKVEKPALDENLYPSQKVSVLELPHDFRLDVGSLEELALGPNDQPDLDRLRKRFGRGKIDDPELWVWRRDRIRELNSTDGSAKTPVRIEGYYVPNPTGCARAEGVKKILNSEKSKYLPHHIKVKKAREERQAQNGKNAKDSVLAAAEAARLAAESLVAKGNSRANRANNRRFVADLNDQRKTLGQDSDVLRFNQLKKRKKPVKFARSAIHNWGLYAMENIPKDDMIIEYVGEEVRQQIAELRENRYLKSGIGSSYLFRIDDNTVIDATKKGGIARFINHSCMPNCTAKIIKVEGSKRIVIYALRDIAQNEELTYDYKFERELGSTDRIPCLCGTAACKGFLN</sequence>
<name>SET1_CHAGB</name>
<gene>
    <name type="primary">SET1</name>
    <name type="ORF">CHGG_07701</name>
</gene>
<dbReference type="EC" id="2.1.1.354" evidence="2"/>
<dbReference type="EMBL" id="CH408033">
    <property type="protein sequence ID" value="EAQ86448.1"/>
    <property type="molecule type" value="Genomic_DNA"/>
</dbReference>
<dbReference type="RefSeq" id="XP_001225357.1">
    <property type="nucleotide sequence ID" value="XM_001225356.1"/>
</dbReference>
<dbReference type="SMR" id="Q2GWF3"/>
<dbReference type="STRING" id="306901.Q2GWF3"/>
<dbReference type="GeneID" id="4393302"/>
<dbReference type="VEuPathDB" id="FungiDB:CHGG_07701"/>
<dbReference type="eggNOG" id="KOG1080">
    <property type="taxonomic scope" value="Eukaryota"/>
</dbReference>
<dbReference type="HOGENOM" id="CLU_004391_0_0_1"/>
<dbReference type="InParanoid" id="Q2GWF3"/>
<dbReference type="OMA" id="CHMTALF"/>
<dbReference type="OrthoDB" id="308383at2759"/>
<dbReference type="Proteomes" id="UP000001056">
    <property type="component" value="Unassembled WGS sequence"/>
</dbReference>
<dbReference type="GO" id="GO:0005694">
    <property type="term" value="C:chromosome"/>
    <property type="evidence" value="ECO:0007669"/>
    <property type="project" value="UniProtKB-SubCell"/>
</dbReference>
<dbReference type="GO" id="GO:0048188">
    <property type="term" value="C:Set1C/COMPASS complex"/>
    <property type="evidence" value="ECO:0000250"/>
    <property type="project" value="UniProtKB"/>
</dbReference>
<dbReference type="GO" id="GO:0140999">
    <property type="term" value="F:histone H3K4 trimethyltransferase activity"/>
    <property type="evidence" value="ECO:0007669"/>
    <property type="project" value="UniProtKB-EC"/>
</dbReference>
<dbReference type="GO" id="GO:0003723">
    <property type="term" value="F:RNA binding"/>
    <property type="evidence" value="ECO:0000250"/>
    <property type="project" value="UniProtKB"/>
</dbReference>
<dbReference type="GO" id="GO:0032259">
    <property type="term" value="P:methylation"/>
    <property type="evidence" value="ECO:0007669"/>
    <property type="project" value="UniProtKB-KW"/>
</dbReference>
<dbReference type="CDD" id="cd20072">
    <property type="entry name" value="SET_SET1"/>
    <property type="match status" value="1"/>
</dbReference>
<dbReference type="Gene3D" id="3.30.70.330">
    <property type="match status" value="1"/>
</dbReference>
<dbReference type="Gene3D" id="2.170.270.10">
    <property type="entry name" value="SET domain"/>
    <property type="match status" value="1"/>
</dbReference>
<dbReference type="InterPro" id="IPR024657">
    <property type="entry name" value="COMPASS_Set1_N-SET"/>
</dbReference>
<dbReference type="InterPro" id="IPR012677">
    <property type="entry name" value="Nucleotide-bd_a/b_plait_sf"/>
</dbReference>
<dbReference type="InterPro" id="IPR003616">
    <property type="entry name" value="Post-SET_dom"/>
</dbReference>
<dbReference type="InterPro" id="IPR035979">
    <property type="entry name" value="RBD_domain_sf"/>
</dbReference>
<dbReference type="InterPro" id="IPR044570">
    <property type="entry name" value="Set1-like"/>
</dbReference>
<dbReference type="InterPro" id="IPR017111">
    <property type="entry name" value="Set1_fungi"/>
</dbReference>
<dbReference type="InterPro" id="IPR024636">
    <property type="entry name" value="SET_assoc"/>
</dbReference>
<dbReference type="InterPro" id="IPR001214">
    <property type="entry name" value="SET_dom"/>
</dbReference>
<dbReference type="InterPro" id="IPR046341">
    <property type="entry name" value="SET_dom_sf"/>
</dbReference>
<dbReference type="PANTHER" id="PTHR45814">
    <property type="entry name" value="HISTONE-LYSINE N-METHYLTRANSFERASE SETD1"/>
    <property type="match status" value="1"/>
</dbReference>
<dbReference type="PANTHER" id="PTHR45814:SF2">
    <property type="entry name" value="HISTONE-LYSINE N-METHYLTRANSFERASE SETD1"/>
    <property type="match status" value="1"/>
</dbReference>
<dbReference type="Pfam" id="PF11764">
    <property type="entry name" value="N-SET"/>
    <property type="match status" value="1"/>
</dbReference>
<dbReference type="Pfam" id="PF00856">
    <property type="entry name" value="SET"/>
    <property type="match status" value="1"/>
</dbReference>
<dbReference type="Pfam" id="PF11767">
    <property type="entry name" value="SET_assoc"/>
    <property type="match status" value="1"/>
</dbReference>
<dbReference type="PIRSF" id="PIRSF037104">
    <property type="entry name" value="Histone_H3-K4_mtfrase_Set1_fun"/>
    <property type="match status" value="1"/>
</dbReference>
<dbReference type="SMART" id="SM01291">
    <property type="entry name" value="N-SET"/>
    <property type="match status" value="1"/>
</dbReference>
<dbReference type="SMART" id="SM00508">
    <property type="entry name" value="PostSET"/>
    <property type="match status" value="1"/>
</dbReference>
<dbReference type="SMART" id="SM00317">
    <property type="entry name" value="SET"/>
    <property type="match status" value="1"/>
</dbReference>
<dbReference type="SUPFAM" id="SSF54928">
    <property type="entry name" value="RNA-binding domain, RBD"/>
    <property type="match status" value="1"/>
</dbReference>
<dbReference type="SUPFAM" id="SSF82199">
    <property type="entry name" value="SET domain"/>
    <property type="match status" value="1"/>
</dbReference>
<dbReference type="PROSITE" id="PS50868">
    <property type="entry name" value="POST_SET"/>
    <property type="match status" value="1"/>
</dbReference>
<dbReference type="PROSITE" id="PS51572">
    <property type="entry name" value="SAM_MT43_1"/>
    <property type="match status" value="1"/>
</dbReference>
<dbReference type="PROSITE" id="PS50280">
    <property type="entry name" value="SET"/>
    <property type="match status" value="1"/>
</dbReference>
<keyword id="KW-0156">Chromatin regulator</keyword>
<keyword id="KW-0158">Chromosome</keyword>
<keyword id="KW-0489">Methyltransferase</keyword>
<keyword id="KW-0539">Nucleus</keyword>
<keyword id="KW-1185">Reference proteome</keyword>
<keyword id="KW-0949">S-adenosyl-L-methionine</keyword>
<keyword id="KW-0808">Transferase</keyword>
<organism>
    <name type="scientific">Chaetomium globosum (strain ATCC 6205 / CBS 148.51 / DSM 1962 / NBRC 6347 / NRRL 1970)</name>
    <name type="common">Soil fungus</name>
    <dbReference type="NCBI Taxonomy" id="306901"/>
    <lineage>
        <taxon>Eukaryota</taxon>
        <taxon>Fungi</taxon>
        <taxon>Dikarya</taxon>
        <taxon>Ascomycota</taxon>
        <taxon>Pezizomycotina</taxon>
        <taxon>Sordariomycetes</taxon>
        <taxon>Sordariomycetidae</taxon>
        <taxon>Sordariales</taxon>
        <taxon>Chaetomiaceae</taxon>
        <taxon>Chaetomium</taxon>
    </lineage>
</organism>
<evidence type="ECO:0000250" key="1">
    <source>
        <dbReference type="UniProtKB" id="P38827"/>
    </source>
</evidence>
<evidence type="ECO:0000250" key="2">
    <source>
        <dbReference type="UniProtKB" id="Q9Y7R4"/>
    </source>
</evidence>
<evidence type="ECO:0000255" key="3">
    <source>
        <dbReference type="PROSITE-ProRule" id="PRU00155"/>
    </source>
</evidence>
<evidence type="ECO:0000255" key="4">
    <source>
        <dbReference type="PROSITE-ProRule" id="PRU00190"/>
    </source>
</evidence>
<evidence type="ECO:0000256" key="5">
    <source>
        <dbReference type="SAM" id="MobiDB-lite"/>
    </source>
</evidence>
<evidence type="ECO:0000305" key="6"/>
<protein>
    <recommendedName>
        <fullName>Histone-lysine N-methyltransferase, H3 lysine-4 specific</fullName>
        <ecNumber evidence="2">2.1.1.354</ecNumber>
    </recommendedName>
    <alternativeName>
        <fullName>COMPASS component SET1</fullName>
    </alternativeName>
    <alternativeName>
        <fullName>SET domain-containing protein 1</fullName>
    </alternativeName>
</protein>
<proteinExistence type="inferred from homology"/>
<accession>Q2GWF3</accession>